<proteinExistence type="inferred from homology"/>
<accession>Q057V0</accession>
<reference key="1">
    <citation type="journal article" date="2006" name="Science">
        <title>A small microbial genome: the end of a long symbiotic relationship?</title>
        <authorList>
            <person name="Perez-Brocal V."/>
            <person name="Gil R."/>
            <person name="Ramos S."/>
            <person name="Lamelas A."/>
            <person name="Postigo M."/>
            <person name="Michelena J.M."/>
            <person name="Silva F.J."/>
            <person name="Moya A."/>
            <person name="Latorre A."/>
        </authorList>
    </citation>
    <scope>NUCLEOTIDE SEQUENCE [LARGE SCALE GENOMIC DNA]</scope>
    <source>
        <strain>Cc</strain>
    </source>
</reference>
<organism>
    <name type="scientific">Buchnera aphidicola subsp. Cinara cedri (strain Cc)</name>
    <dbReference type="NCBI Taxonomy" id="372461"/>
    <lineage>
        <taxon>Bacteria</taxon>
        <taxon>Pseudomonadati</taxon>
        <taxon>Pseudomonadota</taxon>
        <taxon>Gammaproteobacteria</taxon>
        <taxon>Enterobacterales</taxon>
        <taxon>Erwiniaceae</taxon>
        <taxon>Buchnera</taxon>
    </lineage>
</organism>
<name>PTH_BUCCC</name>
<keyword id="KW-0963">Cytoplasm</keyword>
<keyword id="KW-0378">Hydrolase</keyword>
<keyword id="KW-1185">Reference proteome</keyword>
<keyword id="KW-0694">RNA-binding</keyword>
<keyword id="KW-0820">tRNA-binding</keyword>
<evidence type="ECO:0000255" key="1">
    <source>
        <dbReference type="HAMAP-Rule" id="MF_00083"/>
    </source>
</evidence>
<sequence>MNKIKMIVGLGNSVYKYNQTRHNVGFWYINMLSSFYKTSLKFKKKFSGYVSSFFLNNNKIFLLKPDLFMNLNGYSVFALSSFYKIKLSEILVVRDELDLSPGILKVKYGIGHNGHNGVKSIINTFEKKKPFIQLCIGIGRPEFKKNVSNFVLECPSKIDTINIKKAILKFIFLTKDYIYKKEFLKNKKIILI</sequence>
<protein>
    <recommendedName>
        <fullName evidence="1">Peptidyl-tRNA hydrolase</fullName>
        <shortName evidence="1">Pth</shortName>
        <ecNumber evidence="1">3.1.1.29</ecNumber>
    </recommendedName>
</protein>
<gene>
    <name evidence="1" type="primary">pth</name>
    <name type="ordered locus">BCc_123</name>
</gene>
<comment type="function">
    <text evidence="1">Hydrolyzes ribosome-free peptidyl-tRNAs (with 1 or more amino acids incorporated), which drop off the ribosome during protein synthesis, or as a result of ribosome stalling.</text>
</comment>
<comment type="function">
    <text evidence="1">Catalyzes the release of premature peptidyl moieties from peptidyl-tRNA molecules trapped in stalled 50S ribosomal subunits, and thus maintains levels of free tRNAs and 50S ribosomes.</text>
</comment>
<comment type="catalytic activity">
    <reaction evidence="1">
        <text>an N-acyl-L-alpha-aminoacyl-tRNA + H2O = an N-acyl-L-amino acid + a tRNA + H(+)</text>
        <dbReference type="Rhea" id="RHEA:54448"/>
        <dbReference type="Rhea" id="RHEA-COMP:10123"/>
        <dbReference type="Rhea" id="RHEA-COMP:13883"/>
        <dbReference type="ChEBI" id="CHEBI:15377"/>
        <dbReference type="ChEBI" id="CHEBI:15378"/>
        <dbReference type="ChEBI" id="CHEBI:59874"/>
        <dbReference type="ChEBI" id="CHEBI:78442"/>
        <dbReference type="ChEBI" id="CHEBI:138191"/>
        <dbReference type="EC" id="3.1.1.29"/>
    </reaction>
</comment>
<comment type="subunit">
    <text evidence="1">Monomer.</text>
</comment>
<comment type="subcellular location">
    <subcellularLocation>
        <location evidence="1">Cytoplasm</location>
    </subcellularLocation>
</comment>
<comment type="similarity">
    <text evidence="1">Belongs to the PTH family.</text>
</comment>
<feature type="chain" id="PRO_1000092915" description="Peptidyl-tRNA hydrolase">
    <location>
        <begin position="1"/>
        <end position="192"/>
    </location>
</feature>
<feature type="active site" description="Proton acceptor" evidence="1">
    <location>
        <position position="22"/>
    </location>
</feature>
<feature type="binding site" evidence="1">
    <location>
        <position position="17"/>
    </location>
    <ligand>
        <name>tRNA</name>
        <dbReference type="ChEBI" id="CHEBI:17843"/>
    </ligand>
</feature>
<feature type="binding site" evidence="1">
    <location>
        <position position="68"/>
    </location>
    <ligand>
        <name>tRNA</name>
        <dbReference type="ChEBI" id="CHEBI:17843"/>
    </ligand>
</feature>
<feature type="binding site" evidence="1">
    <location>
        <position position="70"/>
    </location>
    <ligand>
        <name>tRNA</name>
        <dbReference type="ChEBI" id="CHEBI:17843"/>
    </ligand>
</feature>
<feature type="binding site" evidence="1">
    <location>
        <position position="116"/>
    </location>
    <ligand>
        <name>tRNA</name>
        <dbReference type="ChEBI" id="CHEBI:17843"/>
    </ligand>
</feature>
<feature type="site" description="Discriminates between blocked and unblocked aminoacyl-tRNA" evidence="1">
    <location>
        <position position="12"/>
    </location>
</feature>
<feature type="site" description="Stabilizes the basic form of H active site to accept a proton" evidence="1">
    <location>
        <position position="95"/>
    </location>
</feature>
<dbReference type="EC" id="3.1.1.29" evidence="1"/>
<dbReference type="EMBL" id="CP000263">
    <property type="protein sequence ID" value="ABJ90599.1"/>
    <property type="molecule type" value="Genomic_DNA"/>
</dbReference>
<dbReference type="SMR" id="Q057V0"/>
<dbReference type="STRING" id="372461.BCc_123"/>
<dbReference type="KEGG" id="bcc:BCc_123"/>
<dbReference type="eggNOG" id="COG0193">
    <property type="taxonomic scope" value="Bacteria"/>
</dbReference>
<dbReference type="HOGENOM" id="CLU_062456_3_1_6"/>
<dbReference type="OrthoDB" id="9800507at2"/>
<dbReference type="Proteomes" id="UP000000669">
    <property type="component" value="Chromosome"/>
</dbReference>
<dbReference type="GO" id="GO:0005737">
    <property type="term" value="C:cytoplasm"/>
    <property type="evidence" value="ECO:0007669"/>
    <property type="project" value="UniProtKB-SubCell"/>
</dbReference>
<dbReference type="GO" id="GO:0004045">
    <property type="term" value="F:peptidyl-tRNA hydrolase activity"/>
    <property type="evidence" value="ECO:0007669"/>
    <property type="project" value="UniProtKB-UniRule"/>
</dbReference>
<dbReference type="GO" id="GO:0000049">
    <property type="term" value="F:tRNA binding"/>
    <property type="evidence" value="ECO:0007669"/>
    <property type="project" value="UniProtKB-UniRule"/>
</dbReference>
<dbReference type="GO" id="GO:0006515">
    <property type="term" value="P:protein quality control for misfolded or incompletely synthesized proteins"/>
    <property type="evidence" value="ECO:0007669"/>
    <property type="project" value="UniProtKB-UniRule"/>
</dbReference>
<dbReference type="GO" id="GO:0072344">
    <property type="term" value="P:rescue of stalled ribosome"/>
    <property type="evidence" value="ECO:0007669"/>
    <property type="project" value="UniProtKB-UniRule"/>
</dbReference>
<dbReference type="CDD" id="cd00462">
    <property type="entry name" value="PTH"/>
    <property type="match status" value="1"/>
</dbReference>
<dbReference type="FunFam" id="3.40.50.1470:FF:000001">
    <property type="entry name" value="Peptidyl-tRNA hydrolase"/>
    <property type="match status" value="1"/>
</dbReference>
<dbReference type="Gene3D" id="3.40.50.1470">
    <property type="entry name" value="Peptidyl-tRNA hydrolase"/>
    <property type="match status" value="1"/>
</dbReference>
<dbReference type="HAMAP" id="MF_00083">
    <property type="entry name" value="Pept_tRNA_hydro_bact"/>
    <property type="match status" value="1"/>
</dbReference>
<dbReference type="InterPro" id="IPR001328">
    <property type="entry name" value="Pept_tRNA_hydro"/>
</dbReference>
<dbReference type="InterPro" id="IPR018171">
    <property type="entry name" value="Pept_tRNA_hydro_CS"/>
</dbReference>
<dbReference type="InterPro" id="IPR036416">
    <property type="entry name" value="Pept_tRNA_hydro_sf"/>
</dbReference>
<dbReference type="NCBIfam" id="TIGR00447">
    <property type="entry name" value="pth"/>
    <property type="match status" value="1"/>
</dbReference>
<dbReference type="PANTHER" id="PTHR17224">
    <property type="entry name" value="PEPTIDYL-TRNA HYDROLASE"/>
    <property type="match status" value="1"/>
</dbReference>
<dbReference type="PANTHER" id="PTHR17224:SF1">
    <property type="entry name" value="PEPTIDYL-TRNA HYDROLASE"/>
    <property type="match status" value="1"/>
</dbReference>
<dbReference type="Pfam" id="PF01195">
    <property type="entry name" value="Pept_tRNA_hydro"/>
    <property type="match status" value="1"/>
</dbReference>
<dbReference type="SUPFAM" id="SSF53178">
    <property type="entry name" value="Peptidyl-tRNA hydrolase-like"/>
    <property type="match status" value="1"/>
</dbReference>
<dbReference type="PROSITE" id="PS01195">
    <property type="entry name" value="PEPT_TRNA_HYDROL_1"/>
    <property type="match status" value="1"/>
</dbReference>
<dbReference type="PROSITE" id="PS01196">
    <property type="entry name" value="PEPT_TRNA_HYDROL_2"/>
    <property type="match status" value="1"/>
</dbReference>